<dbReference type="EMBL" id="AY075046">
    <property type="protein sequence ID" value="AAL78083.1"/>
    <property type="molecule type" value="Genomic_DNA"/>
</dbReference>
<dbReference type="EMBL" id="CP000951">
    <property type="protein sequence ID" value="ACA98241.1"/>
    <property type="molecule type" value="Genomic_DNA"/>
</dbReference>
<dbReference type="RefSeq" id="WP_012305865.1">
    <property type="nucleotide sequence ID" value="NZ_JAHHPU010000004.1"/>
</dbReference>
<dbReference type="SMR" id="Q8RSW4"/>
<dbReference type="STRING" id="32049.SYNPCC7002_A0229"/>
<dbReference type="KEGG" id="syp:SYNPCC7002_A0229"/>
<dbReference type="eggNOG" id="COG4447">
    <property type="taxonomic scope" value="Bacteria"/>
</dbReference>
<dbReference type="HOGENOM" id="CLU_057027_0_0_3"/>
<dbReference type="Proteomes" id="UP000001688">
    <property type="component" value="Chromosome"/>
</dbReference>
<dbReference type="GO" id="GO:0009523">
    <property type="term" value="C:photosystem II"/>
    <property type="evidence" value="ECO:0007669"/>
    <property type="project" value="UniProtKB-KW"/>
</dbReference>
<dbReference type="GO" id="GO:0031676">
    <property type="term" value="C:plasma membrane-derived thylakoid membrane"/>
    <property type="evidence" value="ECO:0007669"/>
    <property type="project" value="UniProtKB-SubCell"/>
</dbReference>
<dbReference type="GO" id="GO:0031977">
    <property type="term" value="C:thylakoid lumen"/>
    <property type="evidence" value="ECO:0007669"/>
    <property type="project" value="UniProtKB-UniRule"/>
</dbReference>
<dbReference type="GO" id="GO:0015979">
    <property type="term" value="P:photosynthesis"/>
    <property type="evidence" value="ECO:0007669"/>
    <property type="project" value="UniProtKB-KW"/>
</dbReference>
<dbReference type="CDD" id="cd15482">
    <property type="entry name" value="Sialidase_non-viral"/>
    <property type="match status" value="1"/>
</dbReference>
<dbReference type="Gene3D" id="2.130.10.10">
    <property type="entry name" value="YVTN repeat-like/Quinoprotein amine dehydrogenase"/>
    <property type="match status" value="1"/>
</dbReference>
<dbReference type="HAMAP" id="MF_01348">
    <property type="entry name" value="Ycf48"/>
    <property type="match status" value="1"/>
</dbReference>
<dbReference type="InterPro" id="IPR028203">
    <property type="entry name" value="PSII_CF48-like_dom"/>
</dbReference>
<dbReference type="InterPro" id="IPR015943">
    <property type="entry name" value="WD40/YVTN_repeat-like_dom_sf"/>
</dbReference>
<dbReference type="InterPro" id="IPR016705">
    <property type="entry name" value="Ycf48/Hcf136"/>
</dbReference>
<dbReference type="NCBIfam" id="NF010237">
    <property type="entry name" value="PRK13684.1"/>
    <property type="match status" value="1"/>
</dbReference>
<dbReference type="PANTHER" id="PTHR47199">
    <property type="entry name" value="PHOTOSYSTEM II STABILITY/ASSEMBLY FACTOR HCF136, CHLOROPLASTIC"/>
    <property type="match status" value="1"/>
</dbReference>
<dbReference type="PANTHER" id="PTHR47199:SF2">
    <property type="entry name" value="PHOTOSYSTEM II STABILITY_ASSEMBLY FACTOR HCF136, CHLOROPLASTIC"/>
    <property type="match status" value="1"/>
</dbReference>
<dbReference type="Pfam" id="PF14870">
    <property type="entry name" value="PSII_BNR"/>
    <property type="match status" value="1"/>
</dbReference>
<dbReference type="PIRSF" id="PIRSF017875">
    <property type="entry name" value="PSII_HCF136"/>
    <property type="match status" value="1"/>
</dbReference>
<dbReference type="SUPFAM" id="SSF110296">
    <property type="entry name" value="Oligoxyloglucan reducing end-specific cellobiohydrolase"/>
    <property type="match status" value="1"/>
</dbReference>
<protein>
    <recommendedName>
        <fullName evidence="2">Photosystem II assembly lipoprotein Ycf48</fullName>
    </recommendedName>
</protein>
<feature type="signal peptide" evidence="2">
    <location>
        <begin position="1"/>
        <end position="26"/>
    </location>
</feature>
<feature type="chain" id="PRO_0000239685" description="Photosystem II assembly lipoprotein Ycf48" evidence="2">
    <location>
        <begin position="27"/>
        <end position="340"/>
    </location>
</feature>
<feature type="lipid moiety-binding region" description="N-palmitoyl cysteine" evidence="1">
    <location>
        <position position="27"/>
    </location>
</feature>
<feature type="lipid moiety-binding region" description="S-diacylglycerol cysteine" evidence="1">
    <location>
        <position position="27"/>
    </location>
</feature>
<comment type="function">
    <text evidence="2">A factor required for optimal assembly of photosystem II (PSII), acting in the early stages of PSII assembly. Also plays a role in replacement of photodamaged D1 (psbA). Assists YidC in synthesis of chlorophyll-binding proteins.</text>
</comment>
<comment type="subunit">
    <text evidence="2">Part of early PSII assembly complexes which includes D1 (psbA) and PsbI; not found in mature PSII. Binds to the lumenal side of PSII complexes. Interacts with YidC.</text>
</comment>
<comment type="subcellular location">
    <subcellularLocation>
        <location evidence="1 4">Cellular thylakoid membrane</location>
        <topology evidence="1 4">Lipid-anchor</topology>
        <orientation evidence="1 4">Lumenal side</orientation>
    </subcellularLocation>
    <text evidence="2">Associated with a PSII precusor complex on the lumenal side of the thylakoid membrane.</text>
</comment>
<comment type="domain">
    <text evidence="2">A 7-bladed beta-propeller torus, about 55 by 55 Angstroms, with a depth of about 25 Angstroms and a central pore.</text>
</comment>
<comment type="disruption phenotype">
    <text evidence="3">Deletion has no effect on PSII activity.</text>
</comment>
<comment type="similarity">
    <text evidence="2">Belongs to the Ycf48 family.</text>
</comment>
<organism>
    <name type="scientific">Picosynechococcus sp. (strain ATCC 27264 / PCC 7002 / PR-6)</name>
    <name type="common">Agmenellum quadruplicatum</name>
    <dbReference type="NCBI Taxonomy" id="32049"/>
    <lineage>
        <taxon>Bacteria</taxon>
        <taxon>Bacillati</taxon>
        <taxon>Cyanobacteriota</taxon>
        <taxon>Cyanophyceae</taxon>
        <taxon>Oscillatoriophycideae</taxon>
        <taxon>Chroococcales</taxon>
        <taxon>Geminocystaceae</taxon>
        <taxon>Picosynechococcus</taxon>
    </lineage>
</organism>
<reference key="1">
    <citation type="journal article" date="2002" name="J. Biol. Chem.">
        <title>Assembly of photosystem I. I. Inactivation of the rubA gene encoding a membrane-associated rubredoxin in the cyanobacterium Synechococcus sp. PCC 7002 causes a loss of photosystem I activity.</title>
        <authorList>
            <person name="Shen G."/>
            <person name="Zhao J."/>
            <person name="Reimer S.K."/>
            <person name="Antonkine M.L."/>
            <person name="Cai Q."/>
            <person name="Weiland S.M."/>
            <person name="Golbeck J.H."/>
            <person name="Bryant D.A."/>
        </authorList>
    </citation>
    <scope>NUCLEOTIDE SEQUENCE [GENOMIC DNA]</scope>
    <scope>DISRUPTION PHENOTYPE</scope>
</reference>
<reference key="2">
    <citation type="submission" date="2008-02" db="EMBL/GenBank/DDBJ databases">
        <title>Complete sequence of Synechococcus sp. PCC 7002.</title>
        <authorList>
            <person name="Li T."/>
            <person name="Zhao J."/>
            <person name="Zhao C."/>
            <person name="Liu Z."/>
            <person name="Zhao F."/>
            <person name="Marquardt J."/>
            <person name="Nomura C.T."/>
            <person name="Persson S."/>
            <person name="Detter J.C."/>
            <person name="Richardson P.M."/>
            <person name="Lanz C."/>
            <person name="Schuster S.C."/>
            <person name="Wang J."/>
            <person name="Li S."/>
            <person name="Huang X."/>
            <person name="Cai T."/>
            <person name="Yu Z."/>
            <person name="Luo J."/>
            <person name="Zhao J."/>
            <person name="Bryant D.A."/>
        </authorList>
    </citation>
    <scope>NUCLEOTIDE SEQUENCE [LARGE SCALE GENOMIC DNA]</scope>
    <source>
        <strain>ATCC 27264 / PCC 7002 / PR-6</strain>
    </source>
</reference>
<name>YCF48_PICP2</name>
<sequence>MTSVLGLLKPLKKAIAAIAVLVLCIGCVQAPTISENPWQEIDLNTDSTFANIAFTDDLQHGWLVGTKETLFETTDGGKTWAERVIDLGDEKESFTGVSFSGQEGWITGRPSILLHTDDGGEHWSRIALSSQLPGAPYNITALGPNTAEMVTDLGAIYKTTDGGKNWKALVEGAVGVARTIERSADGKYVAVSARGNFYSTWSPGDTEWTPHNRNSSRRLQSMGFNGEDKLWLLARGGVVQFSDDTNPDNAEAWSEPVTPQYRNSVGLLHIGYRTPAELWAVGGSGSVVVSKDGGDTWFRDAALEEIPTNFYRVVFLNENKGFILGQQGVILRYDTSTEAA</sequence>
<gene>
    <name evidence="2" type="primary">ycf48</name>
    <name type="ordered locus">SYNPCC7002_A0229</name>
</gene>
<keyword id="KW-0449">Lipoprotein</keyword>
<keyword id="KW-0472">Membrane</keyword>
<keyword id="KW-0564">Palmitate</keyword>
<keyword id="KW-0602">Photosynthesis</keyword>
<keyword id="KW-0604">Photosystem II</keyword>
<keyword id="KW-1185">Reference proteome</keyword>
<keyword id="KW-0732">Signal</keyword>
<keyword id="KW-0793">Thylakoid</keyword>
<proteinExistence type="inferred from homology"/>
<accession>Q8RSW4</accession>
<accession>B1XMQ4</accession>
<evidence type="ECO:0000250" key="1">
    <source>
        <dbReference type="UniProtKB" id="P73069"/>
    </source>
</evidence>
<evidence type="ECO:0000255" key="2">
    <source>
        <dbReference type="HAMAP-Rule" id="MF_01348"/>
    </source>
</evidence>
<evidence type="ECO:0000269" key="3">
    <source>
    </source>
</evidence>
<evidence type="ECO:0000305" key="4"/>